<accession>B1IYL5</accession>
<sequence length="416" mass="43282">MNKQSWLLNLSLLKTHPAFRAVFLARFISIVSLGLLGVAVPVQIQMMTHSTWQVGLSVTLTGGAMFVGLMVGGVLADRYERKKVILLARGTCGIGFIGLCLNALLPEPSLLAIYLLGLWDGFFASLGVTALLAATPALVGRENLMQAGAITMLTVRLGSVISPMIGGLLLATGGVAWNYGLAAAGTFITLLPLLSLPALPPPPQPREHPLKSLLAGFRFLLASPLVGGIALLGGLLTMASAVRVLYPALADNWQMSAAQIGFLYAAIPLGAAIGALTSGKLAHSARPGLLMLLSTLGSFLAIGLFGLMPMWILGVVCLALFGWLSAVSSLLQYTMLQTQTPEAMLGRINGLWTAQNVTGDAIGAALLGGLGAMMTPVASASASGFGLLIIGVLLLLVLVELRHFRQTPPQVTASDS</sequence>
<protein>
    <recommendedName>
        <fullName evidence="1">Enterobactin exporter EntS</fullName>
    </recommendedName>
</protein>
<feature type="chain" id="PRO_1000087443" description="Enterobactin exporter EntS">
    <location>
        <begin position="1"/>
        <end position="416"/>
    </location>
</feature>
<feature type="topological domain" description="Cytoplasmic" evidence="1">
    <location>
        <begin position="1"/>
        <end position="21"/>
    </location>
</feature>
<feature type="transmembrane region" description="Helical" evidence="1">
    <location>
        <begin position="22"/>
        <end position="42"/>
    </location>
</feature>
<feature type="topological domain" description="Periplasmic" evidence="1">
    <location>
        <begin position="43"/>
        <end position="55"/>
    </location>
</feature>
<feature type="transmembrane region" description="Helical" evidence="1">
    <location>
        <begin position="56"/>
        <end position="76"/>
    </location>
</feature>
<feature type="topological domain" description="Cytoplasmic" evidence="1">
    <location>
        <begin position="77"/>
        <end position="83"/>
    </location>
</feature>
<feature type="transmembrane region" description="Helical" evidence="1">
    <location>
        <begin position="84"/>
        <end position="104"/>
    </location>
</feature>
<feature type="topological domain" description="Periplasmic" evidence="1">
    <location>
        <begin position="105"/>
        <end position="109"/>
    </location>
</feature>
<feature type="transmembrane region" description="Helical" evidence="1">
    <location>
        <begin position="110"/>
        <end position="130"/>
    </location>
</feature>
<feature type="topological domain" description="Cytoplasmic" evidence="1">
    <location>
        <begin position="131"/>
        <end position="156"/>
    </location>
</feature>
<feature type="transmembrane region" description="Helical" evidence="1">
    <location>
        <begin position="157"/>
        <end position="177"/>
    </location>
</feature>
<feature type="topological domain" description="Periplasmic" evidence="1">
    <location>
        <position position="178"/>
    </location>
</feature>
<feature type="transmembrane region" description="Helical" evidence="1">
    <location>
        <begin position="179"/>
        <end position="199"/>
    </location>
</feature>
<feature type="topological domain" description="Cytoplasmic" evidence="1">
    <location>
        <begin position="200"/>
        <end position="218"/>
    </location>
</feature>
<feature type="transmembrane region" description="Helical" evidence="1">
    <location>
        <begin position="219"/>
        <end position="239"/>
    </location>
</feature>
<feature type="topological domain" description="Periplasmic" evidence="1">
    <location>
        <begin position="240"/>
        <end position="256"/>
    </location>
</feature>
<feature type="transmembrane region" description="Helical" evidence="1">
    <location>
        <begin position="257"/>
        <end position="277"/>
    </location>
</feature>
<feature type="topological domain" description="Cytoplasmic" evidence="1">
    <location>
        <begin position="278"/>
        <end position="287"/>
    </location>
</feature>
<feature type="transmembrane region" description="Helical" evidence="1">
    <location>
        <begin position="288"/>
        <end position="307"/>
    </location>
</feature>
<feature type="topological domain" description="Periplasmic" evidence="1">
    <location>
        <begin position="308"/>
        <end position="313"/>
    </location>
</feature>
<feature type="transmembrane region" description="Helical" evidence="1">
    <location>
        <begin position="314"/>
        <end position="336"/>
    </location>
</feature>
<feature type="topological domain" description="Cytoplasmic" evidence="1">
    <location>
        <begin position="337"/>
        <end position="356"/>
    </location>
</feature>
<feature type="transmembrane region" description="Helical" evidence="1">
    <location>
        <begin position="357"/>
        <end position="377"/>
    </location>
</feature>
<feature type="topological domain" description="Periplasmic" evidence="1">
    <location>
        <position position="378"/>
    </location>
</feature>
<feature type="transmembrane region" description="Helical" evidence="1">
    <location>
        <begin position="379"/>
        <end position="399"/>
    </location>
</feature>
<feature type="topological domain" description="Cytoplasmic" evidence="1">
    <location>
        <begin position="400"/>
        <end position="416"/>
    </location>
</feature>
<comment type="function">
    <text evidence="1">Component of an export pathway for enterobactin.</text>
</comment>
<comment type="subcellular location">
    <subcellularLocation>
        <location evidence="1">Cell inner membrane</location>
        <topology evidence="1">Multi-pass membrane protein</topology>
    </subcellularLocation>
</comment>
<comment type="similarity">
    <text evidence="1">Belongs to the major facilitator superfamily. EntS (TC 2.A.1.38) family.</text>
</comment>
<dbReference type="EMBL" id="CP000946">
    <property type="protein sequence ID" value="ACA78677.1"/>
    <property type="molecule type" value="Genomic_DNA"/>
</dbReference>
<dbReference type="RefSeq" id="WP_001041786.1">
    <property type="nucleotide sequence ID" value="NZ_MTFT01000005.1"/>
</dbReference>
<dbReference type="SMR" id="B1IYL5"/>
<dbReference type="KEGG" id="ecl:EcolC_3053"/>
<dbReference type="HOGENOM" id="CLU_034180_11_0_6"/>
<dbReference type="GO" id="GO:0005886">
    <property type="term" value="C:plasma membrane"/>
    <property type="evidence" value="ECO:0007669"/>
    <property type="project" value="UniProtKB-SubCell"/>
</dbReference>
<dbReference type="GO" id="GO:0042931">
    <property type="term" value="F:enterobactin transmembrane transporter activity"/>
    <property type="evidence" value="ECO:0007669"/>
    <property type="project" value="InterPro"/>
</dbReference>
<dbReference type="CDD" id="cd06173">
    <property type="entry name" value="MFS_MefA_like"/>
    <property type="match status" value="1"/>
</dbReference>
<dbReference type="FunFam" id="1.20.1250.20:FF:000056">
    <property type="entry name" value="Enterobactin exporter EntS"/>
    <property type="match status" value="1"/>
</dbReference>
<dbReference type="Gene3D" id="1.20.1250.20">
    <property type="entry name" value="MFS general substrate transporter like domains"/>
    <property type="match status" value="1"/>
</dbReference>
<dbReference type="HAMAP" id="MF_01436">
    <property type="entry name" value="MFS_EntS"/>
    <property type="match status" value="1"/>
</dbReference>
<dbReference type="InterPro" id="IPR023722">
    <property type="entry name" value="Enterobactin_exp_EntS"/>
</dbReference>
<dbReference type="InterPro" id="IPR020846">
    <property type="entry name" value="MFS_dom"/>
</dbReference>
<dbReference type="InterPro" id="IPR036259">
    <property type="entry name" value="MFS_trans_sf"/>
</dbReference>
<dbReference type="InterPro" id="IPR010290">
    <property type="entry name" value="TM_effector"/>
</dbReference>
<dbReference type="NCBIfam" id="NF007792">
    <property type="entry name" value="PRK10489.1"/>
    <property type="match status" value="1"/>
</dbReference>
<dbReference type="PANTHER" id="PTHR23513:SF9">
    <property type="entry name" value="ENTEROBACTIN EXPORTER ENTS"/>
    <property type="match status" value="1"/>
</dbReference>
<dbReference type="PANTHER" id="PTHR23513">
    <property type="entry name" value="INTEGRAL MEMBRANE EFFLUX PROTEIN-RELATED"/>
    <property type="match status" value="1"/>
</dbReference>
<dbReference type="Pfam" id="PF05977">
    <property type="entry name" value="MFS_3"/>
    <property type="match status" value="1"/>
</dbReference>
<dbReference type="SUPFAM" id="SSF103473">
    <property type="entry name" value="MFS general substrate transporter"/>
    <property type="match status" value="1"/>
</dbReference>
<dbReference type="PROSITE" id="PS50850">
    <property type="entry name" value="MFS"/>
    <property type="match status" value="1"/>
</dbReference>
<reference key="1">
    <citation type="submission" date="2008-02" db="EMBL/GenBank/DDBJ databases">
        <title>Complete sequence of Escherichia coli C str. ATCC 8739.</title>
        <authorList>
            <person name="Copeland A."/>
            <person name="Lucas S."/>
            <person name="Lapidus A."/>
            <person name="Glavina del Rio T."/>
            <person name="Dalin E."/>
            <person name="Tice H."/>
            <person name="Bruce D."/>
            <person name="Goodwin L."/>
            <person name="Pitluck S."/>
            <person name="Kiss H."/>
            <person name="Brettin T."/>
            <person name="Detter J.C."/>
            <person name="Han C."/>
            <person name="Kuske C.R."/>
            <person name="Schmutz J."/>
            <person name="Larimer F."/>
            <person name="Land M."/>
            <person name="Hauser L."/>
            <person name="Kyrpides N."/>
            <person name="Mikhailova N."/>
            <person name="Ingram L."/>
            <person name="Richardson P."/>
        </authorList>
    </citation>
    <scope>NUCLEOTIDE SEQUENCE [LARGE SCALE GENOMIC DNA]</scope>
    <source>
        <strain>ATCC 8739 / DSM 1576 / NBRC 3972 / NCIMB 8545 / WDCM 00012 / Crooks</strain>
    </source>
</reference>
<name>ENTS_ECOLC</name>
<organism>
    <name type="scientific">Escherichia coli (strain ATCC 8739 / DSM 1576 / NBRC 3972 / NCIMB 8545 / WDCM 00012 / Crooks)</name>
    <dbReference type="NCBI Taxonomy" id="481805"/>
    <lineage>
        <taxon>Bacteria</taxon>
        <taxon>Pseudomonadati</taxon>
        <taxon>Pseudomonadota</taxon>
        <taxon>Gammaproteobacteria</taxon>
        <taxon>Enterobacterales</taxon>
        <taxon>Enterobacteriaceae</taxon>
        <taxon>Escherichia</taxon>
    </lineage>
</organism>
<proteinExistence type="inferred from homology"/>
<evidence type="ECO:0000255" key="1">
    <source>
        <dbReference type="HAMAP-Rule" id="MF_01436"/>
    </source>
</evidence>
<keyword id="KW-0997">Cell inner membrane</keyword>
<keyword id="KW-1003">Cell membrane</keyword>
<keyword id="KW-0472">Membrane</keyword>
<keyword id="KW-0812">Transmembrane</keyword>
<keyword id="KW-1133">Transmembrane helix</keyword>
<keyword id="KW-0813">Transport</keyword>
<gene>
    <name evidence="1" type="primary">entS</name>
    <name type="ordered locus">EcolC_3053</name>
</gene>